<comment type="function">
    <text evidence="1">Catalyzes the phosphorylation of D-fructose 6-phosphate to fructose 1,6-bisphosphate by ATP, the first committing step of glycolysis.</text>
</comment>
<comment type="catalytic activity">
    <reaction evidence="1">
        <text>beta-D-fructose 6-phosphate + ATP = beta-D-fructose 1,6-bisphosphate + ADP + H(+)</text>
        <dbReference type="Rhea" id="RHEA:16109"/>
        <dbReference type="ChEBI" id="CHEBI:15378"/>
        <dbReference type="ChEBI" id="CHEBI:30616"/>
        <dbReference type="ChEBI" id="CHEBI:32966"/>
        <dbReference type="ChEBI" id="CHEBI:57634"/>
        <dbReference type="ChEBI" id="CHEBI:456216"/>
        <dbReference type="EC" id="2.7.1.11"/>
    </reaction>
</comment>
<comment type="cofactor">
    <cofactor evidence="1">
        <name>Mg(2+)</name>
        <dbReference type="ChEBI" id="CHEBI:18420"/>
    </cofactor>
</comment>
<comment type="activity regulation">
    <text evidence="1">Allosterically activated by ADP and other diphosphonucleosides, and allosterically inhibited by phosphoenolpyruvate.</text>
</comment>
<comment type="pathway">
    <text evidence="1">Carbohydrate degradation; glycolysis; D-glyceraldehyde 3-phosphate and glycerone phosphate from D-glucose: step 3/4.</text>
</comment>
<comment type="subunit">
    <text evidence="1">Homotetramer.</text>
</comment>
<comment type="subcellular location">
    <subcellularLocation>
        <location evidence="1">Cytoplasm</location>
    </subcellularLocation>
</comment>
<comment type="similarity">
    <text evidence="1">Belongs to the phosphofructokinase type A (PFKA) family. ATP-dependent PFK group I subfamily. Prokaryotic clade 'B1' sub-subfamily.</text>
</comment>
<evidence type="ECO:0000255" key="1">
    <source>
        <dbReference type="HAMAP-Rule" id="MF_00339"/>
    </source>
</evidence>
<feature type="chain" id="PRO_1000079307" description="ATP-dependent 6-phosphofructokinase">
    <location>
        <begin position="1"/>
        <end position="319"/>
    </location>
</feature>
<feature type="active site" description="Proton acceptor" evidence="1">
    <location>
        <position position="127"/>
    </location>
</feature>
<feature type="binding site" evidence="1">
    <location>
        <position position="11"/>
    </location>
    <ligand>
        <name>ATP</name>
        <dbReference type="ChEBI" id="CHEBI:30616"/>
    </ligand>
</feature>
<feature type="binding site" evidence="1">
    <location>
        <begin position="21"/>
        <end position="25"/>
    </location>
    <ligand>
        <name>ADP</name>
        <dbReference type="ChEBI" id="CHEBI:456216"/>
        <note>allosteric activator; ligand shared between dimeric partners</note>
    </ligand>
</feature>
<feature type="binding site" evidence="1">
    <location>
        <begin position="72"/>
        <end position="73"/>
    </location>
    <ligand>
        <name>ATP</name>
        <dbReference type="ChEBI" id="CHEBI:30616"/>
    </ligand>
</feature>
<feature type="binding site" evidence="1">
    <location>
        <begin position="102"/>
        <end position="105"/>
    </location>
    <ligand>
        <name>ATP</name>
        <dbReference type="ChEBI" id="CHEBI:30616"/>
    </ligand>
</feature>
<feature type="binding site" evidence="1">
    <location>
        <position position="103"/>
    </location>
    <ligand>
        <name>Mg(2+)</name>
        <dbReference type="ChEBI" id="CHEBI:18420"/>
        <note>catalytic</note>
    </ligand>
</feature>
<feature type="binding site" description="in other chain" evidence="1">
    <location>
        <begin position="125"/>
        <end position="127"/>
    </location>
    <ligand>
        <name>substrate</name>
        <note>ligand shared between dimeric partners</note>
    </ligand>
</feature>
<feature type="binding site" description="in other chain" evidence="1">
    <location>
        <position position="154"/>
    </location>
    <ligand>
        <name>ADP</name>
        <dbReference type="ChEBI" id="CHEBI:456216"/>
        <note>allosteric activator; ligand shared between dimeric partners</note>
    </ligand>
</feature>
<feature type="binding site" evidence="1">
    <location>
        <position position="162"/>
    </location>
    <ligand>
        <name>substrate</name>
        <note>ligand shared between dimeric partners</note>
    </ligand>
</feature>
<feature type="binding site" description="in other chain" evidence="1">
    <location>
        <begin position="169"/>
        <end position="171"/>
    </location>
    <ligand>
        <name>substrate</name>
        <note>ligand shared between dimeric partners</note>
    </ligand>
</feature>
<feature type="binding site" description="in other chain" evidence="1">
    <location>
        <begin position="185"/>
        <end position="187"/>
    </location>
    <ligand>
        <name>ADP</name>
        <dbReference type="ChEBI" id="CHEBI:456216"/>
        <note>allosteric activator; ligand shared between dimeric partners</note>
    </ligand>
</feature>
<feature type="binding site" description="in other chain" evidence="1">
    <location>
        <position position="211"/>
    </location>
    <ligand>
        <name>ADP</name>
        <dbReference type="ChEBI" id="CHEBI:456216"/>
        <note>allosteric activator; ligand shared between dimeric partners</note>
    </ligand>
</feature>
<feature type="binding site" description="in other chain" evidence="1">
    <location>
        <begin position="213"/>
        <end position="215"/>
    </location>
    <ligand>
        <name>ADP</name>
        <dbReference type="ChEBI" id="CHEBI:456216"/>
        <note>allosteric activator; ligand shared between dimeric partners</note>
    </ligand>
</feature>
<feature type="binding site" description="in other chain" evidence="1">
    <location>
        <position position="222"/>
    </location>
    <ligand>
        <name>substrate</name>
        <note>ligand shared between dimeric partners</note>
    </ligand>
</feature>
<feature type="binding site" evidence="1">
    <location>
        <position position="243"/>
    </location>
    <ligand>
        <name>substrate</name>
        <note>ligand shared between dimeric partners</note>
    </ligand>
</feature>
<feature type="binding site" description="in other chain" evidence="1">
    <location>
        <begin position="249"/>
        <end position="252"/>
    </location>
    <ligand>
        <name>substrate</name>
        <note>ligand shared between dimeric partners</note>
    </ligand>
</feature>
<proteinExistence type="inferred from homology"/>
<reference key="1">
    <citation type="journal article" date="2008" name="Chem. Biol. Interact.">
        <title>Extending the Bacillus cereus group genomics to putative food-borne pathogens of different toxicity.</title>
        <authorList>
            <person name="Lapidus A."/>
            <person name="Goltsman E."/>
            <person name="Auger S."/>
            <person name="Galleron N."/>
            <person name="Segurens B."/>
            <person name="Dossat C."/>
            <person name="Land M.L."/>
            <person name="Broussolle V."/>
            <person name="Brillard J."/>
            <person name="Guinebretiere M.-H."/>
            <person name="Sanchis V."/>
            <person name="Nguen-the C."/>
            <person name="Lereclus D."/>
            <person name="Richardson P."/>
            <person name="Wincker P."/>
            <person name="Weissenbach J."/>
            <person name="Ehrlich S.D."/>
            <person name="Sorokin A."/>
        </authorList>
    </citation>
    <scope>NUCLEOTIDE SEQUENCE [LARGE SCALE GENOMIC DNA]</scope>
    <source>
        <strain>DSM 22905 / CIP 110041 / 391-98 / NVH 391-98</strain>
    </source>
</reference>
<gene>
    <name evidence="1" type="primary">pfkA</name>
    <name type="ordered locus">Bcer98_3283</name>
</gene>
<keyword id="KW-0021">Allosteric enzyme</keyword>
<keyword id="KW-0067">ATP-binding</keyword>
<keyword id="KW-0963">Cytoplasm</keyword>
<keyword id="KW-0324">Glycolysis</keyword>
<keyword id="KW-0418">Kinase</keyword>
<keyword id="KW-0460">Magnesium</keyword>
<keyword id="KW-0479">Metal-binding</keyword>
<keyword id="KW-0547">Nucleotide-binding</keyword>
<keyword id="KW-0808">Transferase</keyword>
<protein>
    <recommendedName>
        <fullName evidence="1">ATP-dependent 6-phosphofructokinase</fullName>
        <shortName evidence="1">ATP-PFK</shortName>
        <shortName evidence="1">Phosphofructokinase</shortName>
        <ecNumber evidence="1">2.7.1.11</ecNumber>
    </recommendedName>
    <alternativeName>
        <fullName evidence="1">Phosphohexokinase</fullName>
    </alternativeName>
</protein>
<dbReference type="EC" id="2.7.1.11" evidence="1"/>
<dbReference type="EMBL" id="CP000764">
    <property type="protein sequence ID" value="ABS23502.1"/>
    <property type="molecule type" value="Genomic_DNA"/>
</dbReference>
<dbReference type="RefSeq" id="WP_012095743.1">
    <property type="nucleotide sequence ID" value="NC_009674.1"/>
</dbReference>
<dbReference type="SMR" id="A7GTP4"/>
<dbReference type="STRING" id="315749.Bcer98_3283"/>
<dbReference type="GeneID" id="33898528"/>
<dbReference type="KEGG" id="bcy:Bcer98_3283"/>
<dbReference type="eggNOG" id="COG0205">
    <property type="taxonomic scope" value="Bacteria"/>
</dbReference>
<dbReference type="HOGENOM" id="CLU_020655_0_1_9"/>
<dbReference type="OrthoDB" id="9802503at2"/>
<dbReference type="UniPathway" id="UPA00109">
    <property type="reaction ID" value="UER00182"/>
</dbReference>
<dbReference type="Proteomes" id="UP000002300">
    <property type="component" value="Chromosome"/>
</dbReference>
<dbReference type="GO" id="GO:0005945">
    <property type="term" value="C:6-phosphofructokinase complex"/>
    <property type="evidence" value="ECO:0007669"/>
    <property type="project" value="TreeGrafter"/>
</dbReference>
<dbReference type="GO" id="GO:0003872">
    <property type="term" value="F:6-phosphofructokinase activity"/>
    <property type="evidence" value="ECO:0007669"/>
    <property type="project" value="UniProtKB-UniRule"/>
</dbReference>
<dbReference type="GO" id="GO:0016208">
    <property type="term" value="F:AMP binding"/>
    <property type="evidence" value="ECO:0007669"/>
    <property type="project" value="TreeGrafter"/>
</dbReference>
<dbReference type="GO" id="GO:0005524">
    <property type="term" value="F:ATP binding"/>
    <property type="evidence" value="ECO:0007669"/>
    <property type="project" value="UniProtKB-KW"/>
</dbReference>
<dbReference type="GO" id="GO:0070095">
    <property type="term" value="F:fructose-6-phosphate binding"/>
    <property type="evidence" value="ECO:0007669"/>
    <property type="project" value="TreeGrafter"/>
</dbReference>
<dbReference type="GO" id="GO:0042802">
    <property type="term" value="F:identical protein binding"/>
    <property type="evidence" value="ECO:0007669"/>
    <property type="project" value="TreeGrafter"/>
</dbReference>
<dbReference type="GO" id="GO:0046872">
    <property type="term" value="F:metal ion binding"/>
    <property type="evidence" value="ECO:0007669"/>
    <property type="project" value="UniProtKB-KW"/>
</dbReference>
<dbReference type="GO" id="GO:0048029">
    <property type="term" value="F:monosaccharide binding"/>
    <property type="evidence" value="ECO:0007669"/>
    <property type="project" value="TreeGrafter"/>
</dbReference>
<dbReference type="GO" id="GO:0061621">
    <property type="term" value="P:canonical glycolysis"/>
    <property type="evidence" value="ECO:0007669"/>
    <property type="project" value="TreeGrafter"/>
</dbReference>
<dbReference type="GO" id="GO:0030388">
    <property type="term" value="P:fructose 1,6-bisphosphate metabolic process"/>
    <property type="evidence" value="ECO:0007669"/>
    <property type="project" value="TreeGrafter"/>
</dbReference>
<dbReference type="GO" id="GO:0006002">
    <property type="term" value="P:fructose 6-phosphate metabolic process"/>
    <property type="evidence" value="ECO:0007669"/>
    <property type="project" value="InterPro"/>
</dbReference>
<dbReference type="CDD" id="cd00763">
    <property type="entry name" value="Bacterial_PFK"/>
    <property type="match status" value="1"/>
</dbReference>
<dbReference type="FunFam" id="3.40.50.450:FF:000001">
    <property type="entry name" value="ATP-dependent 6-phosphofructokinase"/>
    <property type="match status" value="1"/>
</dbReference>
<dbReference type="FunFam" id="3.40.50.460:FF:000002">
    <property type="entry name" value="ATP-dependent 6-phosphofructokinase"/>
    <property type="match status" value="1"/>
</dbReference>
<dbReference type="Gene3D" id="3.40.50.450">
    <property type="match status" value="1"/>
</dbReference>
<dbReference type="Gene3D" id="3.40.50.460">
    <property type="entry name" value="Phosphofructokinase domain"/>
    <property type="match status" value="1"/>
</dbReference>
<dbReference type="HAMAP" id="MF_00339">
    <property type="entry name" value="Phosphofructokinase_I_B1"/>
    <property type="match status" value="1"/>
</dbReference>
<dbReference type="InterPro" id="IPR022953">
    <property type="entry name" value="ATP_PFK"/>
</dbReference>
<dbReference type="InterPro" id="IPR012003">
    <property type="entry name" value="ATP_PFK_prok-type"/>
</dbReference>
<dbReference type="InterPro" id="IPR012828">
    <property type="entry name" value="PFKA_ATP_prok"/>
</dbReference>
<dbReference type="InterPro" id="IPR015912">
    <property type="entry name" value="Phosphofructokinase_CS"/>
</dbReference>
<dbReference type="InterPro" id="IPR000023">
    <property type="entry name" value="Phosphofructokinase_dom"/>
</dbReference>
<dbReference type="InterPro" id="IPR035966">
    <property type="entry name" value="PKF_sf"/>
</dbReference>
<dbReference type="NCBIfam" id="TIGR02482">
    <property type="entry name" value="PFKA_ATP"/>
    <property type="match status" value="1"/>
</dbReference>
<dbReference type="NCBIfam" id="NF002872">
    <property type="entry name" value="PRK03202.1"/>
    <property type="match status" value="1"/>
</dbReference>
<dbReference type="PANTHER" id="PTHR13697:SF4">
    <property type="entry name" value="ATP-DEPENDENT 6-PHOSPHOFRUCTOKINASE"/>
    <property type="match status" value="1"/>
</dbReference>
<dbReference type="PANTHER" id="PTHR13697">
    <property type="entry name" value="PHOSPHOFRUCTOKINASE"/>
    <property type="match status" value="1"/>
</dbReference>
<dbReference type="Pfam" id="PF00365">
    <property type="entry name" value="PFK"/>
    <property type="match status" value="1"/>
</dbReference>
<dbReference type="PIRSF" id="PIRSF000532">
    <property type="entry name" value="ATP_PFK_prok"/>
    <property type="match status" value="1"/>
</dbReference>
<dbReference type="PRINTS" id="PR00476">
    <property type="entry name" value="PHFRCTKINASE"/>
</dbReference>
<dbReference type="SUPFAM" id="SSF53784">
    <property type="entry name" value="Phosphofructokinase"/>
    <property type="match status" value="1"/>
</dbReference>
<dbReference type="PROSITE" id="PS00433">
    <property type="entry name" value="PHOSPHOFRUCTOKINASE"/>
    <property type="match status" value="1"/>
</dbReference>
<accession>A7GTP4</accession>
<organism>
    <name type="scientific">Bacillus cytotoxicus (strain DSM 22905 / CIP 110041 / 391-98 / NVH 391-98)</name>
    <dbReference type="NCBI Taxonomy" id="315749"/>
    <lineage>
        <taxon>Bacteria</taxon>
        <taxon>Bacillati</taxon>
        <taxon>Bacillota</taxon>
        <taxon>Bacilli</taxon>
        <taxon>Bacillales</taxon>
        <taxon>Bacillaceae</taxon>
        <taxon>Bacillus</taxon>
        <taxon>Bacillus cereus group</taxon>
    </lineage>
</organism>
<sequence length="319" mass="34259">MKRIGVLTSGGDSPGMNAAIRAVVRKAIYHDIEVYGIYHGYAGLISGHIEKLELGSVGDIIHRGGTKLYTARCPEFKDPAVREKGIEQLKKHGIEGLVVIGGDGSYQGAKKLTEQGFPCVGVPGTIDNDIPGTDFTIGFDTALNTVIDAIDKIRDTATSHERTYVIEVMGRHAGDIALWAGLADGAETILIPEAEYDMDDVIARLKRGSERGKKHSIIVVAEGVGSAIDIGKKIEEATNFDTRVTVLGHVQRGGSPSAQDRVLASRLGARAVELLMEGKGGRCVGIQNNKLVDHDIIEALAQKHVIDIDMYQLSKELSI</sequence>
<name>PFKA_BACCN</name>